<reference key="1">
    <citation type="journal article" date="2012" name="J. Virol.">
        <title>Complete genome sequences of two Helicobacter pylori bacteriophages isolated from Japanese patients.</title>
        <authorList>
            <person name="Uchiyama J."/>
            <person name="Takeuchi H."/>
            <person name="Kato S."/>
            <person name="Takemura-Uchiyama I."/>
            <person name="Ujihara T."/>
            <person name="Daibata M."/>
            <person name="Matsuzaki S."/>
        </authorList>
    </citation>
    <scope>NUCLEOTIDE SEQUENCE [GENOMIC DNA]</scope>
</reference>
<reference key="2">
    <citation type="journal article" date="2013" name="Appl. Environ. Microbiol.">
        <title>Characterization of Helicobacter pylori bacteriophage KHP30.</title>
        <authorList>
            <person name="Uchiyama J."/>
            <person name="Takeuchi H."/>
            <person name="Kato S."/>
            <person name="Gamoh K."/>
            <person name="Takemura-Uchiyama I."/>
            <person name="Ujihara T."/>
            <person name="Daibata M."/>
            <person name="Matsuzaki S."/>
        </authorList>
    </citation>
    <scope>IDENTIFICATION BY MASS SPECTROMETRY</scope>
</reference>
<sequence>MDFTTLQNDFTNDYQKALIANNEFLEAKKYYNGNQLPQDVLNIILERGQTPIIENMFKVIVNKILGYKIESISEIRLSPKQEEDRALSDLLNSLLQVFIQQENYDKSMIERDKNLLIGGLGVIQLWVSQDKDKNVEIEIKAIKPESFVIDYFSTDKNALDARRFHKMLEVSEQEALLLFGDSVIVNYSNVNHERIASVIESWYKEYNEETQSYEWNRYLWNRNTGIYKSEKKPFKNGACPFIVSKLYTDELNNYYGLFRDIKPMQDFINYAENRMGNMMGSFKAMFEEDAVVDVAEFVETMSLDNAIAKVRPNALKDHKIQFMNNQADLSALSQKAEQKRQLLRLLAGLNDESLGMAVNRQSGVAIAQRKESGLMGLQTFLKATDDMDRLIFRLAVSFICEYFTKEQVFKIVDKKLGDRYFKINSNDDNKIRPLKFDLILKSQLKTESRDEKWYNWNELLKILAPIRPDLVPSLVPLMLNDMDSPITNDVLEAIQNANALQQQNAEANAPYNQQIQALQIQKLQAEIMELQAKAHKYAEQGALSQTTNESEKINQAVAITEMQQQNANNANNEESNNKPKKKLKTSDKTTWRKYPSAQNLDY</sequence>
<name>PORTL_BPKHP</name>
<evidence type="ECO:0000250" key="1">
    <source>
        <dbReference type="UniProtKB" id="P03728"/>
    </source>
</evidence>
<evidence type="ECO:0000255" key="2"/>
<evidence type="ECO:0000256" key="3">
    <source>
        <dbReference type="SAM" id="MobiDB-lite"/>
    </source>
</evidence>
<evidence type="ECO:0000312" key="4">
    <source>
        <dbReference type="EMBL" id="BAM34759.1"/>
    </source>
</evidence>
<comment type="function">
    <text evidence="1">Forms the portal vertex of the capsid. This portal plays critical roles in head assembly, genome packaging, neck/tail attachment, and genome ejection. The portal protein multimerizes as a single ring-shaped homododecamer arranged around a central channel.</text>
</comment>
<comment type="subunit">
    <text evidence="1">Homododecamer.</text>
</comment>
<comment type="subcellular location">
    <subcellularLocation>
        <location evidence="1">Virion</location>
    </subcellularLocation>
</comment>
<gene>
    <name type="ORF">ORF17</name>
</gene>
<dbReference type="EMBL" id="AB647160">
    <property type="protein sequence ID" value="BAM34759.1"/>
    <property type="molecule type" value="Genomic_DNA"/>
</dbReference>
<dbReference type="RefSeq" id="YP_007237637.1">
    <property type="nucleotide sequence ID" value="NC_019928.1"/>
</dbReference>
<dbReference type="PDB" id="7WMP">
    <property type="method" value="EM"/>
    <property type="resolution" value="3.60 A"/>
    <property type="chains" value="a/b/c/d/e/f/g/h/i/j/k/l=1-602"/>
</dbReference>
<dbReference type="PDBsum" id="7WMP"/>
<dbReference type="EMDB" id="EMD-32616"/>
<dbReference type="SMR" id="I7HHN4"/>
<dbReference type="KEGG" id="vg:14297148"/>
<dbReference type="OrthoDB" id="1622at10239"/>
<dbReference type="Proteomes" id="UP000002900">
    <property type="component" value="Genome"/>
</dbReference>
<dbReference type="GO" id="GO:0019028">
    <property type="term" value="C:viral capsid"/>
    <property type="evidence" value="ECO:0007669"/>
    <property type="project" value="UniProtKB-KW"/>
</dbReference>
<dbReference type="GO" id="GO:0099002">
    <property type="term" value="P:symbiont genome ejection through host cell envelope, short tail mechanism"/>
    <property type="evidence" value="ECO:0007669"/>
    <property type="project" value="UniProtKB-KW"/>
</dbReference>
<protein>
    <recommendedName>
        <fullName evidence="4">Portal protein</fullName>
    </recommendedName>
    <alternativeName>
        <fullName>Head-to-tail connector gp8</fullName>
    </alternativeName>
    <alternativeName>
        <fullName evidence="4">Putative portal protein ORF17</fullName>
    </alternativeName>
</protein>
<accession>I7HHN4</accession>
<organism>
    <name type="scientific">Helicobacter pylori bacteriophage KHP30</name>
    <dbReference type="NCBI Taxonomy" id="1208236"/>
    <lineage>
        <taxon>Viruses</taxon>
        <taxon>Duplodnaviria</taxon>
        <taxon>Heunggongvirae</taxon>
        <taxon>Uroviricota</taxon>
        <taxon>Caudoviricetes</taxon>
        <taxon>Schmidvirus</taxon>
        <taxon>Schmidvirus KHP30</taxon>
    </lineage>
</organism>
<keyword id="KW-0002">3D-structure</keyword>
<keyword id="KW-0167">Capsid protein</keyword>
<keyword id="KW-0175">Coiled coil</keyword>
<keyword id="KW-1185">Reference proteome</keyword>
<keyword id="KW-0118">Viral capsid assembly</keyword>
<keyword id="KW-1171">Viral genome ejection through host cell envelope</keyword>
<keyword id="KW-0231">Viral genome packaging</keyword>
<keyword id="KW-1162">Viral penetration into host cytoplasm</keyword>
<keyword id="KW-1188">Viral release from host cell</keyword>
<keyword id="KW-1244">Viral short tail ejection system</keyword>
<keyword id="KW-0946">Virion</keyword>
<keyword id="KW-1160">Virus entry into host cell</keyword>
<proteinExistence type="evidence at protein level"/>
<organismHost>
    <name type="scientific">Helicobacter pylori (strain 35A)</name>
    <dbReference type="NCBI Taxonomy" id="585535"/>
</organismHost>
<organismHost>
    <name type="scientific">Helicobacter pylori (strain F16)</name>
    <dbReference type="NCBI Taxonomy" id="866344"/>
</organismHost>
<organismHost>
    <name type="scientific">Helicobacter pylori (strain F30)</name>
    <dbReference type="NCBI Taxonomy" id="866345"/>
</organismHost>
<organismHost>
    <name type="scientific">Helicobacter pylori (strain F32)</name>
    <dbReference type="NCBI Taxonomy" id="102608"/>
</organismHost>
<organismHost>
    <name type="scientific">Helicobacter pylori (strain F57)</name>
    <dbReference type="NCBI Taxonomy" id="866346"/>
</organismHost>
<feature type="chain" id="PRO_0000420439" description="Portal protein">
    <location>
        <begin position="1"/>
        <end position="602"/>
    </location>
</feature>
<feature type="region of interest" description="Disordered" evidence="3">
    <location>
        <begin position="567"/>
        <end position="602"/>
    </location>
</feature>
<feature type="coiled-coil region" evidence="2">
    <location>
        <begin position="324"/>
        <end position="352"/>
    </location>
</feature>
<feature type="coiled-coil region" evidence="2">
    <location>
        <begin position="486"/>
        <end position="542"/>
    </location>
</feature>